<comment type="function">
    <text evidence="1">Catalyzes the conversion of 3-deoxy-D-arabino-heptulosonate 7-phosphate (DAHP) to dehydroquinate (DHQ).</text>
</comment>
<comment type="catalytic activity">
    <reaction evidence="1">
        <text>7-phospho-2-dehydro-3-deoxy-D-arabino-heptonate = 3-dehydroquinate + phosphate</text>
        <dbReference type="Rhea" id="RHEA:21968"/>
        <dbReference type="ChEBI" id="CHEBI:32364"/>
        <dbReference type="ChEBI" id="CHEBI:43474"/>
        <dbReference type="ChEBI" id="CHEBI:58394"/>
        <dbReference type="EC" id="4.2.3.4"/>
    </reaction>
</comment>
<comment type="cofactor">
    <cofactor evidence="1">
        <name>Co(2+)</name>
        <dbReference type="ChEBI" id="CHEBI:48828"/>
    </cofactor>
    <cofactor evidence="1">
        <name>Zn(2+)</name>
        <dbReference type="ChEBI" id="CHEBI:29105"/>
    </cofactor>
    <text evidence="1">Binds 1 divalent metal cation per subunit. Can use either Co(2+) or Zn(2+).</text>
</comment>
<comment type="cofactor">
    <cofactor evidence="1">
        <name>NAD(+)</name>
        <dbReference type="ChEBI" id="CHEBI:57540"/>
    </cofactor>
</comment>
<comment type="pathway">
    <text evidence="1">Metabolic intermediate biosynthesis; chorismate biosynthesis; chorismate from D-erythrose 4-phosphate and phosphoenolpyruvate: step 2/7.</text>
</comment>
<comment type="subcellular location">
    <subcellularLocation>
        <location evidence="1">Cytoplasm</location>
    </subcellularLocation>
</comment>
<comment type="similarity">
    <text evidence="1">Belongs to the sugar phosphate cyclases superfamily. Dehydroquinate synthase family.</text>
</comment>
<sequence>MKTLEVKTSSATYPVYIGDGIKRNIVDLMTSTGHSYTKLLIVTDTAVDAIYGDEMVRLLEQKWSVHKVVVPSGEQSKSFAEFEHIHTKAIQFQLDRSSCIIALGGGVIGDLAGFVAASYMRGIDFIQVPTTLLAHDSAVGGKTGINHPLGKNLIGAFHQPKAVIYDTSMLETLSQTEMRSGFAEVIKHALISSEDFLKELMSIRSLDECSKSELAHMLYQGIEVKASIVQKDEREQGVRAFLNLGHTLGHAIEAEYGYGVITHGDAIAIGMQFALYVSEKKLGLSLHRTELKEWMKKLGFPVQVTQDISTKTFVDRMIGDKKARGGTVQFVLLKQVGDAVLQSFTKDDLHQWLDEWKREEGCL</sequence>
<name>AROB_BACP2</name>
<accession>A8FEK4</accession>
<feature type="chain" id="PRO_1000094458" description="3-dehydroquinate synthase">
    <location>
        <begin position="1"/>
        <end position="363"/>
    </location>
</feature>
<feature type="binding site" evidence="1">
    <location>
        <begin position="72"/>
        <end position="77"/>
    </location>
    <ligand>
        <name>NAD(+)</name>
        <dbReference type="ChEBI" id="CHEBI:57540"/>
    </ligand>
</feature>
<feature type="binding site" evidence="1">
    <location>
        <begin position="106"/>
        <end position="110"/>
    </location>
    <ligand>
        <name>NAD(+)</name>
        <dbReference type="ChEBI" id="CHEBI:57540"/>
    </ligand>
</feature>
<feature type="binding site" evidence="1">
    <location>
        <begin position="130"/>
        <end position="131"/>
    </location>
    <ligand>
        <name>NAD(+)</name>
        <dbReference type="ChEBI" id="CHEBI:57540"/>
    </ligand>
</feature>
<feature type="binding site" evidence="1">
    <location>
        <position position="142"/>
    </location>
    <ligand>
        <name>NAD(+)</name>
        <dbReference type="ChEBI" id="CHEBI:57540"/>
    </ligand>
</feature>
<feature type="binding site" evidence="1">
    <location>
        <position position="151"/>
    </location>
    <ligand>
        <name>NAD(+)</name>
        <dbReference type="ChEBI" id="CHEBI:57540"/>
    </ligand>
</feature>
<feature type="binding site" evidence="1">
    <location>
        <position position="184"/>
    </location>
    <ligand>
        <name>Zn(2+)</name>
        <dbReference type="ChEBI" id="CHEBI:29105"/>
    </ligand>
</feature>
<feature type="binding site" evidence="1">
    <location>
        <position position="246"/>
    </location>
    <ligand>
        <name>Zn(2+)</name>
        <dbReference type="ChEBI" id="CHEBI:29105"/>
    </ligand>
</feature>
<feature type="binding site" evidence="1">
    <location>
        <position position="263"/>
    </location>
    <ligand>
        <name>Zn(2+)</name>
        <dbReference type="ChEBI" id="CHEBI:29105"/>
    </ligand>
</feature>
<reference key="1">
    <citation type="journal article" date="2007" name="PLoS ONE">
        <title>Paradoxical DNA repair and peroxide resistance gene conservation in Bacillus pumilus SAFR-032.</title>
        <authorList>
            <person name="Gioia J."/>
            <person name="Yerrapragada S."/>
            <person name="Qin X."/>
            <person name="Jiang H."/>
            <person name="Igboeli O.C."/>
            <person name="Muzny D."/>
            <person name="Dugan-Rocha S."/>
            <person name="Ding Y."/>
            <person name="Hawes A."/>
            <person name="Liu W."/>
            <person name="Perez L."/>
            <person name="Kovar C."/>
            <person name="Dinh H."/>
            <person name="Lee S."/>
            <person name="Nazareth L."/>
            <person name="Blyth P."/>
            <person name="Holder M."/>
            <person name="Buhay C."/>
            <person name="Tirumalai M.R."/>
            <person name="Liu Y."/>
            <person name="Dasgupta I."/>
            <person name="Bokhetache L."/>
            <person name="Fujita M."/>
            <person name="Karouia F."/>
            <person name="Eswara Moorthy P."/>
            <person name="Siefert J."/>
            <person name="Uzman A."/>
            <person name="Buzumbo P."/>
            <person name="Verma A."/>
            <person name="Zwiya H."/>
            <person name="McWilliams B.D."/>
            <person name="Olowu A."/>
            <person name="Clinkenbeard K.D."/>
            <person name="Newcombe D."/>
            <person name="Golebiewski L."/>
            <person name="Petrosino J.F."/>
            <person name="Nicholson W.L."/>
            <person name="Fox G.E."/>
            <person name="Venkateswaran K."/>
            <person name="Highlander S.K."/>
            <person name="Weinstock G.M."/>
        </authorList>
    </citation>
    <scope>NUCLEOTIDE SEQUENCE [LARGE SCALE GENOMIC DNA]</scope>
    <source>
        <strain>SAFR-032</strain>
    </source>
</reference>
<keyword id="KW-0028">Amino-acid biosynthesis</keyword>
<keyword id="KW-0057">Aromatic amino acid biosynthesis</keyword>
<keyword id="KW-0170">Cobalt</keyword>
<keyword id="KW-0963">Cytoplasm</keyword>
<keyword id="KW-0456">Lyase</keyword>
<keyword id="KW-0479">Metal-binding</keyword>
<keyword id="KW-0520">NAD</keyword>
<keyword id="KW-0547">Nucleotide-binding</keyword>
<keyword id="KW-0862">Zinc</keyword>
<gene>
    <name evidence="1" type="primary">aroB</name>
    <name type="ordered locus">BPUM_2001</name>
</gene>
<dbReference type="EC" id="4.2.3.4" evidence="1"/>
<dbReference type="EMBL" id="CP000813">
    <property type="protein sequence ID" value="ABV62671.1"/>
    <property type="molecule type" value="Genomic_DNA"/>
</dbReference>
<dbReference type="RefSeq" id="WP_012010382.1">
    <property type="nucleotide sequence ID" value="NZ_VEIS01000015.1"/>
</dbReference>
<dbReference type="SMR" id="A8FEK4"/>
<dbReference type="STRING" id="315750.BPUM_2001"/>
<dbReference type="GeneID" id="5621267"/>
<dbReference type="KEGG" id="bpu:BPUM_2001"/>
<dbReference type="eggNOG" id="COG0337">
    <property type="taxonomic scope" value="Bacteria"/>
</dbReference>
<dbReference type="HOGENOM" id="CLU_001201_0_1_9"/>
<dbReference type="OrthoDB" id="9806583at2"/>
<dbReference type="UniPathway" id="UPA00053">
    <property type="reaction ID" value="UER00085"/>
</dbReference>
<dbReference type="Proteomes" id="UP000001355">
    <property type="component" value="Chromosome"/>
</dbReference>
<dbReference type="GO" id="GO:0005737">
    <property type="term" value="C:cytoplasm"/>
    <property type="evidence" value="ECO:0007669"/>
    <property type="project" value="UniProtKB-SubCell"/>
</dbReference>
<dbReference type="GO" id="GO:0003856">
    <property type="term" value="F:3-dehydroquinate synthase activity"/>
    <property type="evidence" value="ECO:0007669"/>
    <property type="project" value="UniProtKB-UniRule"/>
</dbReference>
<dbReference type="GO" id="GO:0046872">
    <property type="term" value="F:metal ion binding"/>
    <property type="evidence" value="ECO:0007669"/>
    <property type="project" value="UniProtKB-KW"/>
</dbReference>
<dbReference type="GO" id="GO:0000166">
    <property type="term" value="F:nucleotide binding"/>
    <property type="evidence" value="ECO:0007669"/>
    <property type="project" value="UniProtKB-KW"/>
</dbReference>
<dbReference type="GO" id="GO:0008652">
    <property type="term" value="P:amino acid biosynthetic process"/>
    <property type="evidence" value="ECO:0007669"/>
    <property type="project" value="UniProtKB-KW"/>
</dbReference>
<dbReference type="GO" id="GO:0009073">
    <property type="term" value="P:aromatic amino acid family biosynthetic process"/>
    <property type="evidence" value="ECO:0007669"/>
    <property type="project" value="UniProtKB-KW"/>
</dbReference>
<dbReference type="GO" id="GO:0009423">
    <property type="term" value="P:chorismate biosynthetic process"/>
    <property type="evidence" value="ECO:0007669"/>
    <property type="project" value="UniProtKB-UniRule"/>
</dbReference>
<dbReference type="CDD" id="cd08195">
    <property type="entry name" value="DHQS"/>
    <property type="match status" value="1"/>
</dbReference>
<dbReference type="FunFam" id="3.40.50.1970:FF:000001">
    <property type="entry name" value="3-dehydroquinate synthase"/>
    <property type="match status" value="1"/>
</dbReference>
<dbReference type="Gene3D" id="3.40.50.1970">
    <property type="match status" value="1"/>
</dbReference>
<dbReference type="Gene3D" id="1.20.1090.10">
    <property type="entry name" value="Dehydroquinate synthase-like - alpha domain"/>
    <property type="match status" value="1"/>
</dbReference>
<dbReference type="HAMAP" id="MF_00110">
    <property type="entry name" value="DHQ_synthase"/>
    <property type="match status" value="1"/>
</dbReference>
<dbReference type="InterPro" id="IPR050071">
    <property type="entry name" value="Dehydroquinate_synthase"/>
</dbReference>
<dbReference type="InterPro" id="IPR016037">
    <property type="entry name" value="DHQ_synth_AroB"/>
</dbReference>
<dbReference type="InterPro" id="IPR030963">
    <property type="entry name" value="DHQ_synth_fam"/>
</dbReference>
<dbReference type="InterPro" id="IPR030960">
    <property type="entry name" value="DHQS/DOIS_N"/>
</dbReference>
<dbReference type="InterPro" id="IPR056179">
    <property type="entry name" value="DHQS_C"/>
</dbReference>
<dbReference type="NCBIfam" id="TIGR01357">
    <property type="entry name" value="aroB"/>
    <property type="match status" value="1"/>
</dbReference>
<dbReference type="PANTHER" id="PTHR43622">
    <property type="entry name" value="3-DEHYDROQUINATE SYNTHASE"/>
    <property type="match status" value="1"/>
</dbReference>
<dbReference type="PANTHER" id="PTHR43622:SF7">
    <property type="entry name" value="3-DEHYDROQUINATE SYNTHASE, CHLOROPLASTIC"/>
    <property type="match status" value="1"/>
</dbReference>
<dbReference type="Pfam" id="PF01761">
    <property type="entry name" value="DHQ_synthase"/>
    <property type="match status" value="1"/>
</dbReference>
<dbReference type="Pfam" id="PF24621">
    <property type="entry name" value="DHQS_C"/>
    <property type="match status" value="1"/>
</dbReference>
<dbReference type="PIRSF" id="PIRSF001455">
    <property type="entry name" value="DHQ_synth"/>
    <property type="match status" value="1"/>
</dbReference>
<dbReference type="SUPFAM" id="SSF56796">
    <property type="entry name" value="Dehydroquinate synthase-like"/>
    <property type="match status" value="1"/>
</dbReference>
<proteinExistence type="inferred from homology"/>
<evidence type="ECO:0000255" key="1">
    <source>
        <dbReference type="HAMAP-Rule" id="MF_00110"/>
    </source>
</evidence>
<organism>
    <name type="scientific">Bacillus pumilus (strain SAFR-032)</name>
    <dbReference type="NCBI Taxonomy" id="315750"/>
    <lineage>
        <taxon>Bacteria</taxon>
        <taxon>Bacillati</taxon>
        <taxon>Bacillota</taxon>
        <taxon>Bacilli</taxon>
        <taxon>Bacillales</taxon>
        <taxon>Bacillaceae</taxon>
        <taxon>Bacillus</taxon>
    </lineage>
</organism>
<protein>
    <recommendedName>
        <fullName evidence="1">3-dehydroquinate synthase</fullName>
        <shortName evidence="1">DHQS</shortName>
        <ecNumber evidence="1">4.2.3.4</ecNumber>
    </recommendedName>
</protein>